<proteinExistence type="evidence at protein level"/>
<reference key="1">
    <citation type="journal article" date="2003" name="Proc. Natl. Acad. Sci. U.S.A.">
        <title>Genome sequence of the cyanobacterium Prochlorococcus marinus SS120, a nearly minimal oxyphototrophic genome.</title>
        <authorList>
            <person name="Dufresne A."/>
            <person name="Salanoubat M."/>
            <person name="Partensky F."/>
            <person name="Artiguenave F."/>
            <person name="Axmann I.M."/>
            <person name="Barbe V."/>
            <person name="Duprat S."/>
            <person name="Galperin M.Y."/>
            <person name="Koonin E.V."/>
            <person name="Le Gall F."/>
            <person name="Makarova K.S."/>
            <person name="Ostrowski M."/>
            <person name="Oztas S."/>
            <person name="Robert C."/>
            <person name="Rogozin I.B."/>
            <person name="Scanlan D.J."/>
            <person name="Tandeau de Marsac N."/>
            <person name="Weissenbach J."/>
            <person name="Wincker P."/>
            <person name="Wolf Y.I."/>
            <person name="Hess W.R."/>
        </authorList>
    </citation>
    <scope>NUCLEOTIDE SEQUENCE [LARGE SCALE GENOMIC DNA]</scope>
    <source>
        <strain>SARG / CCMP1375 / SS120</strain>
    </source>
</reference>
<evidence type="ECO:0000255" key="1">
    <source>
        <dbReference type="HAMAP-Rule" id="MF_00355"/>
    </source>
</evidence>
<evidence type="ECO:0007829" key="2">
    <source>
        <dbReference type="PDB" id="2YNM"/>
    </source>
</evidence>
<dbReference type="EC" id="1.3.7.7" evidence="1"/>
<dbReference type="EMBL" id="AE017126">
    <property type="protein sequence ID" value="AAP99589.1"/>
    <property type="molecule type" value="Genomic_DNA"/>
</dbReference>
<dbReference type="RefSeq" id="NP_874937.1">
    <property type="nucleotide sequence ID" value="NC_005042.1"/>
</dbReference>
<dbReference type="PDB" id="2YNM">
    <property type="method" value="X-ray"/>
    <property type="resolution" value="2.10 A"/>
    <property type="chains" value="A/B=1-296"/>
</dbReference>
<dbReference type="PDBsum" id="2YNM"/>
<dbReference type="SMR" id="Q7VD39"/>
<dbReference type="IntAct" id="Q7VD39">
    <property type="interactions" value="1"/>
</dbReference>
<dbReference type="STRING" id="167539.Pro_0544"/>
<dbReference type="EnsemblBacteria" id="AAP99589">
    <property type="protein sequence ID" value="AAP99589"/>
    <property type="gene ID" value="Pro_0544"/>
</dbReference>
<dbReference type="KEGG" id="pma:Pro_0544"/>
<dbReference type="PATRIC" id="fig|167539.5.peg.559"/>
<dbReference type="eggNOG" id="COG1348">
    <property type="taxonomic scope" value="Bacteria"/>
</dbReference>
<dbReference type="HOGENOM" id="CLU_059373_2_0_3"/>
<dbReference type="OrthoDB" id="9778641at2"/>
<dbReference type="BRENDA" id="1.3.1.33">
    <property type="organism ID" value="5023"/>
</dbReference>
<dbReference type="BRENDA" id="1.3.7.7">
    <property type="organism ID" value="5023"/>
</dbReference>
<dbReference type="UniPathway" id="UPA00670"/>
<dbReference type="EvolutionaryTrace" id="Q7VD39"/>
<dbReference type="Proteomes" id="UP000001420">
    <property type="component" value="Chromosome"/>
</dbReference>
<dbReference type="GO" id="GO:0051539">
    <property type="term" value="F:4 iron, 4 sulfur cluster binding"/>
    <property type="evidence" value="ECO:0007669"/>
    <property type="project" value="UniProtKB-UniRule"/>
</dbReference>
<dbReference type="GO" id="GO:0005524">
    <property type="term" value="F:ATP binding"/>
    <property type="evidence" value="ECO:0007669"/>
    <property type="project" value="UniProtKB-UniRule"/>
</dbReference>
<dbReference type="GO" id="GO:0046872">
    <property type="term" value="F:metal ion binding"/>
    <property type="evidence" value="ECO:0007669"/>
    <property type="project" value="UniProtKB-KW"/>
</dbReference>
<dbReference type="GO" id="GO:0016730">
    <property type="term" value="F:oxidoreductase activity, acting on iron-sulfur proteins as donors"/>
    <property type="evidence" value="ECO:0007669"/>
    <property type="project" value="InterPro"/>
</dbReference>
<dbReference type="GO" id="GO:0016636">
    <property type="term" value="F:oxidoreductase activity, acting on the CH-CH group of donors, iron-sulfur protein as acceptor"/>
    <property type="evidence" value="ECO:0007669"/>
    <property type="project" value="UniProtKB-UniRule"/>
</dbReference>
<dbReference type="GO" id="GO:0036068">
    <property type="term" value="P:light-independent chlorophyll biosynthetic process"/>
    <property type="evidence" value="ECO:0007669"/>
    <property type="project" value="UniProtKB-UniRule"/>
</dbReference>
<dbReference type="GO" id="GO:0019685">
    <property type="term" value="P:photosynthesis, dark reaction"/>
    <property type="evidence" value="ECO:0007669"/>
    <property type="project" value="InterPro"/>
</dbReference>
<dbReference type="CDD" id="cd02032">
    <property type="entry name" value="Bchl-like"/>
    <property type="match status" value="1"/>
</dbReference>
<dbReference type="Gene3D" id="3.40.50.300">
    <property type="entry name" value="P-loop containing nucleotide triphosphate hydrolases"/>
    <property type="match status" value="1"/>
</dbReference>
<dbReference type="HAMAP" id="MF_00355">
    <property type="entry name" value="ChlL_BchL"/>
    <property type="match status" value="1"/>
</dbReference>
<dbReference type="InterPro" id="IPR030655">
    <property type="entry name" value="NifH/chlL_CS"/>
</dbReference>
<dbReference type="InterPro" id="IPR000392">
    <property type="entry name" value="NifH/frxC"/>
</dbReference>
<dbReference type="InterPro" id="IPR027417">
    <property type="entry name" value="P-loop_NTPase"/>
</dbReference>
<dbReference type="InterPro" id="IPR005971">
    <property type="entry name" value="Protochlorophyllide_ATP-bd"/>
</dbReference>
<dbReference type="NCBIfam" id="TIGR01281">
    <property type="entry name" value="DPOR_bchL"/>
    <property type="match status" value="1"/>
</dbReference>
<dbReference type="PANTHER" id="PTHR42864">
    <property type="entry name" value="LIGHT-INDEPENDENT PROTOCHLOROPHYLLIDE REDUCTASE IRON-SULFUR ATP-BINDING PROTEIN"/>
    <property type="match status" value="1"/>
</dbReference>
<dbReference type="PANTHER" id="PTHR42864:SF2">
    <property type="entry name" value="LIGHT-INDEPENDENT PROTOCHLOROPHYLLIDE REDUCTASE IRON-SULFUR ATP-BINDING PROTEIN"/>
    <property type="match status" value="1"/>
</dbReference>
<dbReference type="Pfam" id="PF00142">
    <property type="entry name" value="Fer4_NifH"/>
    <property type="match status" value="1"/>
</dbReference>
<dbReference type="PIRSF" id="PIRSF000363">
    <property type="entry name" value="Nitrogenase_iron"/>
    <property type="match status" value="1"/>
</dbReference>
<dbReference type="PRINTS" id="PR00091">
    <property type="entry name" value="NITROGNASEII"/>
</dbReference>
<dbReference type="SUPFAM" id="SSF52540">
    <property type="entry name" value="P-loop containing nucleoside triphosphate hydrolases"/>
    <property type="match status" value="1"/>
</dbReference>
<dbReference type="PROSITE" id="PS00746">
    <property type="entry name" value="NIFH_FRXC_1"/>
    <property type="match status" value="1"/>
</dbReference>
<dbReference type="PROSITE" id="PS00692">
    <property type="entry name" value="NIFH_FRXC_2"/>
    <property type="match status" value="1"/>
</dbReference>
<dbReference type="PROSITE" id="PS51026">
    <property type="entry name" value="NIFH_FRXC_3"/>
    <property type="match status" value="1"/>
</dbReference>
<gene>
    <name evidence="1" type="primary">chlL</name>
    <name type="ordered locus">Pro_0544</name>
</gene>
<organism>
    <name type="scientific">Prochlorococcus marinus (strain SARG / CCMP1375 / SS120)</name>
    <dbReference type="NCBI Taxonomy" id="167539"/>
    <lineage>
        <taxon>Bacteria</taxon>
        <taxon>Bacillati</taxon>
        <taxon>Cyanobacteriota</taxon>
        <taxon>Cyanophyceae</taxon>
        <taxon>Synechococcales</taxon>
        <taxon>Prochlorococcaceae</taxon>
        <taxon>Prochlorococcus</taxon>
    </lineage>
</organism>
<protein>
    <recommendedName>
        <fullName evidence="1">Light-independent protochlorophyllide reductase iron-sulfur ATP-binding protein</fullName>
        <shortName evidence="1">DPOR subunit L</shortName>
        <shortName evidence="1">LI-POR subunit L</shortName>
        <ecNumber evidence="1">1.3.7.7</ecNumber>
    </recommendedName>
</protein>
<sequence length="296" mass="32395">MTTTLANRPDGEGSVQVKLDPKVNIEEGALVIAVYGKGGIGKSTTSSNLSAAFSKLGKKVLQIGCDPKHDSTFTLTHKMVPTVIDILEEVDFHSEELRPQDFMFEGFNGVQCVESGGPPAGTGCGGYVTGQTVKLLKEHHLLEDTDVVIFDVLGDVVCGGFAAPLQHANYCLIVTANDFDSIFAMNRIVAAINAKAKNYKVRLGGVIANRSAELDQIEKFNEKTGLKTMAHFRNVDAIRRSRLKKCTIFEMDPEEEGVLEVQNEYLSLAKKMIDNVEPLEAEPLKDREIFDLLGFD</sequence>
<comment type="function">
    <text evidence="1">Component of the dark-operative protochlorophyllide reductase (DPOR) that uses Mg-ATP and reduced ferredoxin to reduce ring D of protochlorophyllide (Pchlide) to form chlorophyllide a (Chlide). This reaction is light-independent. The L component serves as a unique electron donor to the NB-component of the complex, and binds Mg-ATP.</text>
</comment>
<comment type="catalytic activity">
    <reaction evidence="1">
        <text>chlorophyllide a + oxidized 2[4Fe-4S]-[ferredoxin] + 2 ADP + 2 phosphate = protochlorophyllide a + reduced 2[4Fe-4S]-[ferredoxin] + 2 ATP + 2 H2O</text>
        <dbReference type="Rhea" id="RHEA:28202"/>
        <dbReference type="Rhea" id="RHEA-COMP:10002"/>
        <dbReference type="Rhea" id="RHEA-COMP:10004"/>
        <dbReference type="ChEBI" id="CHEBI:15377"/>
        <dbReference type="ChEBI" id="CHEBI:30616"/>
        <dbReference type="ChEBI" id="CHEBI:33722"/>
        <dbReference type="ChEBI" id="CHEBI:33723"/>
        <dbReference type="ChEBI" id="CHEBI:43474"/>
        <dbReference type="ChEBI" id="CHEBI:83348"/>
        <dbReference type="ChEBI" id="CHEBI:83350"/>
        <dbReference type="ChEBI" id="CHEBI:456216"/>
        <dbReference type="EC" id="1.3.7.7"/>
    </reaction>
</comment>
<comment type="cofactor">
    <cofactor evidence="1">
        <name>[4Fe-4S] cluster</name>
        <dbReference type="ChEBI" id="CHEBI:49883"/>
    </cofactor>
    <text evidence="1">Binds 1 [4Fe-4S] cluster per dimer.</text>
</comment>
<comment type="pathway">
    <text evidence="1">Porphyrin-containing compound metabolism; chlorophyll biosynthesis (light-independent).</text>
</comment>
<comment type="subunit">
    <text evidence="1">Homodimer. Protochlorophyllide reductase is composed of three subunits; ChlL, ChlN and ChlB.</text>
</comment>
<comment type="similarity">
    <text evidence="1">Belongs to the NifH/BchL/ChlL family.</text>
</comment>
<name>CHLL_PROMA</name>
<feature type="chain" id="PRO_0000324057" description="Light-independent protochlorophyllide reductase iron-sulfur ATP-binding protein">
    <location>
        <begin position="1"/>
        <end position="296"/>
    </location>
</feature>
<feature type="binding site" evidence="1">
    <location>
        <begin position="39"/>
        <end position="44"/>
    </location>
    <ligand>
        <name>ATP</name>
        <dbReference type="ChEBI" id="CHEBI:30616"/>
    </ligand>
</feature>
<feature type="binding site" evidence="1">
    <location>
        <position position="43"/>
    </location>
    <ligand>
        <name>Mg(2+)</name>
        <dbReference type="ChEBI" id="CHEBI:18420"/>
    </ligand>
</feature>
<feature type="binding site" evidence="1">
    <location>
        <position position="68"/>
    </location>
    <ligand>
        <name>ATP</name>
        <dbReference type="ChEBI" id="CHEBI:30616"/>
    </ligand>
</feature>
<feature type="binding site" evidence="1">
    <location>
        <position position="124"/>
    </location>
    <ligand>
        <name>[4Fe-4S] cluster</name>
        <dbReference type="ChEBI" id="CHEBI:49883"/>
        <note>ligand shared between dimeric partners</note>
    </ligand>
</feature>
<feature type="binding site" evidence="1">
    <location>
        <position position="158"/>
    </location>
    <ligand>
        <name>[4Fe-4S] cluster</name>
        <dbReference type="ChEBI" id="CHEBI:49883"/>
        <note>ligand shared between dimeric partners</note>
    </ligand>
</feature>
<feature type="binding site" evidence="1">
    <location>
        <begin position="209"/>
        <end position="210"/>
    </location>
    <ligand>
        <name>ATP</name>
        <dbReference type="ChEBI" id="CHEBI:30616"/>
    </ligand>
</feature>
<feature type="strand" evidence="2">
    <location>
        <begin position="30"/>
        <end position="37"/>
    </location>
</feature>
<feature type="helix" evidence="2">
    <location>
        <begin position="42"/>
        <end position="55"/>
    </location>
</feature>
<feature type="strand" evidence="2">
    <location>
        <begin position="60"/>
        <end position="66"/>
    </location>
</feature>
<feature type="helix" evidence="2">
    <location>
        <begin position="73"/>
        <end position="76"/>
    </location>
</feature>
<feature type="helix" evidence="2">
    <location>
        <begin position="83"/>
        <end position="89"/>
    </location>
</feature>
<feature type="turn" evidence="2">
    <location>
        <begin position="90"/>
        <end position="92"/>
    </location>
</feature>
<feature type="helix" evidence="2">
    <location>
        <begin position="94"/>
        <end position="96"/>
    </location>
</feature>
<feature type="helix" evidence="2">
    <location>
        <begin position="99"/>
        <end position="102"/>
    </location>
</feature>
<feature type="helix" evidence="2">
    <location>
        <begin position="107"/>
        <end position="109"/>
    </location>
</feature>
<feature type="strand" evidence="2">
    <location>
        <begin position="111"/>
        <end position="114"/>
    </location>
</feature>
<feature type="strand" evidence="2">
    <location>
        <begin position="122"/>
        <end position="124"/>
    </location>
</feature>
<feature type="helix" evidence="2">
    <location>
        <begin position="125"/>
        <end position="138"/>
    </location>
</feature>
<feature type="turn" evidence="2">
    <location>
        <begin position="139"/>
        <end position="143"/>
    </location>
</feature>
<feature type="strand" evidence="2">
    <location>
        <begin position="144"/>
        <end position="152"/>
    </location>
</feature>
<feature type="helix" evidence="2">
    <location>
        <begin position="159"/>
        <end position="161"/>
    </location>
</feature>
<feature type="helix" evidence="2">
    <location>
        <begin position="163"/>
        <end position="166"/>
    </location>
</feature>
<feature type="strand" evidence="2">
    <location>
        <begin position="169"/>
        <end position="175"/>
    </location>
</feature>
<feature type="helix" evidence="2">
    <location>
        <begin position="179"/>
        <end position="195"/>
    </location>
</feature>
<feature type="turn" evidence="2">
    <location>
        <begin position="196"/>
        <end position="198"/>
    </location>
</feature>
<feature type="strand" evidence="2">
    <location>
        <begin position="202"/>
        <end position="210"/>
    </location>
</feature>
<feature type="helix" evidence="2">
    <location>
        <begin position="215"/>
        <end position="224"/>
    </location>
</feature>
<feature type="strand" evidence="2">
    <location>
        <begin position="228"/>
        <end position="232"/>
    </location>
</feature>
<feature type="helix" evidence="2">
    <location>
        <begin position="236"/>
        <end position="243"/>
    </location>
</feature>
<feature type="helix" evidence="2">
    <location>
        <begin position="248"/>
        <end position="250"/>
    </location>
</feature>
<feature type="helix" evidence="2">
    <location>
        <begin position="258"/>
        <end position="274"/>
    </location>
</feature>
<feature type="helix" evidence="2">
    <location>
        <begin position="286"/>
        <end position="292"/>
    </location>
</feature>
<accession>Q7VD39</accession>
<keyword id="KW-0002">3D-structure</keyword>
<keyword id="KW-0004">4Fe-4S</keyword>
<keyword id="KW-0067">ATP-binding</keyword>
<keyword id="KW-0149">Chlorophyll biosynthesis</keyword>
<keyword id="KW-0408">Iron</keyword>
<keyword id="KW-0411">Iron-sulfur</keyword>
<keyword id="KW-0460">Magnesium</keyword>
<keyword id="KW-0479">Metal-binding</keyword>
<keyword id="KW-0547">Nucleotide-binding</keyword>
<keyword id="KW-0560">Oxidoreductase</keyword>
<keyword id="KW-0602">Photosynthesis</keyword>
<keyword id="KW-1185">Reference proteome</keyword>